<comment type="function">
    <text evidence="1">Plays a role in the elongation phase of viral strand displacement replication by unwinding the template in an ATP-independent fashion, employing its capacity to form multimers. Also enhances the rate of initiation. Released from template upon second strand synthesis. Assembles in complex with viral pTP, viral pol, host NFIA and host POU2F1/OCT1 on viral origin of replication. Covers the whole ssDNA genome during synthesis. The complementary strand synthesis induces its relese from DNA template. May inhibit cellular transcription mediated by the interaction between host SRCAP and CBP.</text>
</comment>
<comment type="subunit">
    <text evidence="1">Homomultimerizes on viral ssDNA bound to pTP. Forms a initiation complex with viral polymerase, pTP and hosts NFIA and POU2F1/OCT1. Interacts with host SRCAP.</text>
</comment>
<comment type="subcellular location">
    <subcellularLocation>
        <location evidence="1">Host nucleus</location>
    </subcellularLocation>
    <text evidence="1">Accumulates in infected cells.</text>
</comment>
<comment type="domain">
    <text evidence="1">The C-terminal arm bridges DBP molecules together, thereby creating a chain.</text>
</comment>
<comment type="similarity">
    <text evidence="1">Belongs to the adenoviridae E2A DNA-binding protein family.</text>
</comment>
<dbReference type="EMBL" id="Y07760">
    <property type="protein sequence ID" value="CAA69038.1"/>
    <property type="molecule type" value="Genomic_DNA"/>
</dbReference>
<dbReference type="RefSeq" id="AP_000061.1">
    <property type="nucleotide sequence ID" value="AC_000003.1"/>
</dbReference>
<dbReference type="SMR" id="Q96687"/>
<dbReference type="KEGG" id="vg:1488933"/>
<dbReference type="Proteomes" id="UP000126130">
    <property type="component" value="Segment"/>
</dbReference>
<dbReference type="GO" id="GO:0042025">
    <property type="term" value="C:host cell nucleus"/>
    <property type="evidence" value="ECO:0007669"/>
    <property type="project" value="UniProtKB-SubCell"/>
</dbReference>
<dbReference type="GO" id="GO:0019028">
    <property type="term" value="C:viral capsid"/>
    <property type="evidence" value="ECO:0007669"/>
    <property type="project" value="UniProtKB-UniRule"/>
</dbReference>
<dbReference type="GO" id="GO:0003677">
    <property type="term" value="F:DNA binding"/>
    <property type="evidence" value="ECO:0007669"/>
    <property type="project" value="UniProtKB-UniRule"/>
</dbReference>
<dbReference type="GO" id="GO:0008270">
    <property type="term" value="F:zinc ion binding"/>
    <property type="evidence" value="ECO:0007669"/>
    <property type="project" value="UniProtKB-UniRule"/>
</dbReference>
<dbReference type="GO" id="GO:0006260">
    <property type="term" value="P:DNA replication"/>
    <property type="evidence" value="ECO:0007669"/>
    <property type="project" value="UniProtKB-KW"/>
</dbReference>
<dbReference type="GO" id="GO:0006351">
    <property type="term" value="P:DNA-templated transcription"/>
    <property type="evidence" value="ECO:0007669"/>
    <property type="project" value="UniProtKB-UniRule"/>
</dbReference>
<dbReference type="GO" id="GO:0045740">
    <property type="term" value="P:positive regulation of DNA replication"/>
    <property type="evidence" value="ECO:0007669"/>
    <property type="project" value="UniProtKB-UniRule"/>
</dbReference>
<dbReference type="GO" id="GO:0039687">
    <property type="term" value="P:viral DNA strand displacement replication"/>
    <property type="evidence" value="ECO:0007669"/>
    <property type="project" value="UniProtKB-UniRule"/>
</dbReference>
<dbReference type="Gene3D" id="3.90.148.10">
    <property type="entry name" value="Adenovirus DNA-binding, C-terminal domain superfamily/Adenovirus DNA-binding, zinc binding domain"/>
    <property type="match status" value="1"/>
</dbReference>
<dbReference type="Gene3D" id="1.10.269.10">
    <property type="entry name" value="Adenovirus DNA-binding, N-terminal domain"/>
    <property type="match status" value="1"/>
</dbReference>
<dbReference type="HAMAP" id="MF_04054">
    <property type="entry name" value="ADV_DNB2"/>
    <property type="match status" value="1"/>
</dbReference>
<dbReference type="InterPro" id="IPR036367">
    <property type="entry name" value="Ad_DBP_C_sf"/>
</dbReference>
<dbReference type="InterPro" id="IPR036368">
    <property type="entry name" value="ADBP_zn-bd_sf"/>
</dbReference>
<dbReference type="InterPro" id="IPR003176">
    <property type="entry name" value="Adenovirus_DNA-bd_a"/>
</dbReference>
<dbReference type="InterPro" id="IPR036362">
    <property type="entry name" value="Adenovirus_DNA-bd_N_sf"/>
</dbReference>
<dbReference type="InterPro" id="IPR005376">
    <property type="entry name" value="Adenovirus_DNA-bd_zn-bd"/>
</dbReference>
<dbReference type="InterPro" id="IPR037540">
    <property type="entry name" value="ADV_DNB2"/>
</dbReference>
<dbReference type="Pfam" id="PF02236">
    <property type="entry name" value="Viral_DNA_bi"/>
    <property type="match status" value="1"/>
</dbReference>
<dbReference type="Pfam" id="PF03728">
    <property type="entry name" value="Viral_DNA_Zn_bi"/>
    <property type="match status" value="2"/>
</dbReference>
<dbReference type="SUPFAM" id="SSF47724">
    <property type="entry name" value="Domain of early E2A DNA-binding protein, ADDBP"/>
    <property type="match status" value="1"/>
</dbReference>
<dbReference type="SUPFAM" id="SSF57917">
    <property type="entry name" value="Zn-binding domains of ADDBP"/>
    <property type="match status" value="2"/>
</dbReference>
<sequence length="454" mass="50294">MSHKKVVAISESSSDEEVPVAPPTAPPKKRQRKAVEEPRGHQAMVEIARQATAALKARGDPGSIIVQTFCDQTVDVDKEGNVIFTPAKQKSICNKSGSPLASVASKIFKASEHKWQSAMEFALKVLNAYQVDHSKLTLLPDEGTLECFKKAVQAYITTSKMHVTYTFTNQKTFLHVAGRLLLDFVIKAAELAPGVNPSGCVVWQHGCQSSLMCLHGSPMIQKEQLVEMDVNSENAQRALKENPEKTKIVSNRWGRNVVQFKNEDAFCCSMDVNMSGGNFSGASCGMFYTDGPKAIMAFQQIMAFLKACYPSMPNAESHLLMPLKCECNWNSSLPLLGRQTCKITPFSLASANHIDKSEVDDQKMLATLNNPAMLVFQCCNPVYRNSKAAPQKNCDFKISSVDLVSCLQIAKQIWLSTVGEKPPVKFPEFHWSDEHRYQTTILPQGQHDDDLVLF</sequence>
<proteinExistence type="inferred from homology"/>
<gene>
    <name evidence="1" type="primary">DBP</name>
</gene>
<evidence type="ECO:0000255" key="1">
    <source>
        <dbReference type="HAMAP-Rule" id="MF_04054"/>
    </source>
</evidence>
<evidence type="ECO:0000256" key="2">
    <source>
        <dbReference type="SAM" id="MobiDB-lite"/>
    </source>
</evidence>
<organism>
    <name type="scientific">Canine adenovirus serotype 1 (strain RI261)</name>
    <name type="common">CAdV-1</name>
    <name type="synonym">Canine adenovirus 1 (strain RI261)</name>
    <dbReference type="NCBI Taxonomy" id="69151"/>
    <lineage>
        <taxon>Viruses</taxon>
        <taxon>Varidnaviria</taxon>
        <taxon>Bamfordvirae</taxon>
        <taxon>Preplasmiviricota</taxon>
        <taxon>Tectiliviricetes</taxon>
        <taxon>Rowavirales</taxon>
        <taxon>Adenoviridae</taxon>
        <taxon>Mastadenovirus</taxon>
        <taxon>Canine mastadenovirus A</taxon>
    </lineage>
</organism>
<feature type="chain" id="PRO_0000221685" description="DNA-binding protein">
    <location>
        <begin position="1"/>
        <end position="454"/>
    </location>
</feature>
<feature type="region of interest" description="Disordered" evidence="2">
    <location>
        <begin position="1"/>
        <end position="41"/>
    </location>
</feature>
<feature type="region of interest" description="Flexible loop" evidence="1">
    <location>
        <begin position="226"/>
        <end position="260"/>
    </location>
</feature>
<feature type="region of interest" description="C-terminal arm, DBP binding" evidence="1">
    <location>
        <begin position="440"/>
        <end position="454"/>
    </location>
</feature>
<feature type="binding site" evidence="1">
    <location>
        <position position="213"/>
    </location>
    <ligand>
        <name>Zn(2+)</name>
        <dbReference type="ChEBI" id="CHEBI:29105"/>
        <label>1</label>
    </ligand>
</feature>
<feature type="binding site" evidence="1">
    <location>
        <position position="215"/>
    </location>
    <ligand>
        <name>Zn(2+)</name>
        <dbReference type="ChEBI" id="CHEBI:29105"/>
        <label>1</label>
    </ligand>
</feature>
<feature type="binding site" evidence="1">
    <location>
        <position position="268"/>
    </location>
    <ligand>
        <name>Zn(2+)</name>
        <dbReference type="ChEBI" id="CHEBI:29105"/>
        <label>1</label>
    </ligand>
</feature>
<feature type="binding site" evidence="1">
    <location>
        <position position="284"/>
    </location>
    <ligand>
        <name>Zn(2+)</name>
        <dbReference type="ChEBI" id="CHEBI:29105"/>
        <label>1</label>
    </ligand>
</feature>
<feature type="binding site" evidence="1">
    <location>
        <position position="325"/>
    </location>
    <ligand>
        <name>Zn(2+)</name>
        <dbReference type="ChEBI" id="CHEBI:29105"/>
        <label>2</label>
    </ligand>
</feature>
<feature type="binding site" evidence="1">
    <location>
        <position position="327"/>
    </location>
    <ligand>
        <name>Zn(2+)</name>
        <dbReference type="ChEBI" id="CHEBI:29105"/>
        <label>2</label>
    </ligand>
</feature>
<feature type="binding site" evidence="1">
    <location>
        <position position="378"/>
    </location>
    <ligand>
        <name>Zn(2+)</name>
        <dbReference type="ChEBI" id="CHEBI:29105"/>
        <label>2</label>
    </ligand>
</feature>
<feature type="binding site" evidence="1">
    <location>
        <position position="394"/>
    </location>
    <ligand>
        <name>Zn(2+)</name>
        <dbReference type="ChEBI" id="CHEBI:29105"/>
        <label>2</label>
    </ligand>
</feature>
<feature type="modified residue" description="Phosphotyrosine; by host" evidence="1">
    <location>
        <position position="129"/>
    </location>
</feature>
<name>DNB2_ADECR</name>
<accession>Q96687</accession>
<keyword id="KW-0235">DNA replication</keyword>
<keyword id="KW-0238">DNA-binding</keyword>
<keyword id="KW-0244">Early protein</keyword>
<keyword id="KW-1048">Host nucleus</keyword>
<keyword id="KW-0945">Host-virus interaction</keyword>
<keyword id="KW-0479">Metal-binding</keyword>
<keyword id="KW-0597">Phosphoprotein</keyword>
<keyword id="KW-1194">Viral DNA replication</keyword>
<keyword id="KW-0862">Zinc</keyword>
<protein>
    <recommendedName>
        <fullName evidence="1">DNA-binding protein</fullName>
        <shortName evidence="1">DBP</shortName>
    </recommendedName>
    <alternativeName>
        <fullName evidence="1">Early 2A protein</fullName>
    </alternativeName>
    <alternativeName>
        <fullName evidence="1">Early E2A DNA-binding protein</fullName>
    </alternativeName>
</protein>
<organismHost>
    <name type="scientific">Canis lupus familiaris</name>
    <name type="common">Dog</name>
    <name type="synonym">Canis familiaris</name>
    <dbReference type="NCBI Taxonomy" id="9615"/>
</organismHost>
<reference key="1">
    <citation type="journal article" date="1997" name="J. Gen. Virol.">
        <title>Complete DNA sequence of canine adenovirus type 1.</title>
        <authorList>
            <person name="Morrison M.D."/>
            <person name="Onions D.E."/>
            <person name="Nicolson L."/>
        </authorList>
    </citation>
    <scope>NUCLEOTIDE SEQUENCE [LARGE SCALE GENOMIC DNA]</scope>
</reference>